<gene>
    <name type="primary">mt-cyb</name>
    <name type="synonym">cob</name>
    <name type="synonym">cytb</name>
    <name type="synonym">mtcyb</name>
</gene>
<evidence type="ECO:0000250" key="1"/>
<evidence type="ECO:0000250" key="2">
    <source>
        <dbReference type="UniProtKB" id="P00157"/>
    </source>
</evidence>
<evidence type="ECO:0000255" key="3">
    <source>
        <dbReference type="PROSITE-ProRule" id="PRU00968"/>
    </source>
</evidence>
<accession>P69220</accession>
<accession>P16365</accession>
<name>CYB_AMPCI</name>
<sequence length="79" mass="9048">TALFLAMHYTSDIATAFSSVAHICRDVNYGWLIRNMHANGASFFFICIYLHIGRGLYYGSYLYKETWNVGVVLLLLTMM</sequence>
<feature type="chain" id="PRO_0000060789" description="Cytochrome b">
    <location>
        <begin position="1" status="less than"/>
        <end position="79" status="greater than"/>
    </location>
</feature>
<feature type="transmembrane region" description="Helical" evidence="2">
    <location>
        <begin position="1" status="less than"/>
        <end position="7"/>
    </location>
</feature>
<feature type="transmembrane region" description="Helical" evidence="2">
    <location>
        <begin position="31"/>
        <end position="52"/>
    </location>
</feature>
<feature type="transmembrane region" description="Helical" evidence="2">
    <location>
        <begin position="67"/>
        <end position="79" status="greater than"/>
    </location>
</feature>
<feature type="binding site" description="axial binding residue" evidence="2">
    <location>
        <position position="37"/>
    </location>
    <ligand>
        <name>heme b</name>
        <dbReference type="ChEBI" id="CHEBI:60344"/>
        <label>b562</label>
    </ligand>
    <ligandPart>
        <name>Fe</name>
        <dbReference type="ChEBI" id="CHEBI:18248"/>
    </ligandPart>
</feature>
<feature type="binding site" description="axial binding residue" evidence="2">
    <location>
        <position position="51"/>
    </location>
    <ligand>
        <name>heme b</name>
        <dbReference type="ChEBI" id="CHEBI:60344"/>
        <label>b566</label>
    </ligand>
    <ligandPart>
        <name>Fe</name>
        <dbReference type="ChEBI" id="CHEBI:18248"/>
    </ligandPart>
</feature>
<feature type="non-terminal residue">
    <location>
        <position position="1"/>
    </location>
</feature>
<feature type="non-terminal residue">
    <location>
        <position position="79"/>
    </location>
</feature>
<keyword id="KW-0249">Electron transport</keyword>
<keyword id="KW-0349">Heme</keyword>
<keyword id="KW-0408">Iron</keyword>
<keyword id="KW-0472">Membrane</keyword>
<keyword id="KW-0479">Metal-binding</keyword>
<keyword id="KW-0496">Mitochondrion</keyword>
<keyword id="KW-0999">Mitochondrion inner membrane</keyword>
<keyword id="KW-0679">Respiratory chain</keyword>
<keyword id="KW-0812">Transmembrane</keyword>
<keyword id="KW-1133">Transmembrane helix</keyword>
<keyword id="KW-0813">Transport</keyword>
<keyword id="KW-0830">Ubiquinone</keyword>
<reference key="1">
    <citation type="journal article" date="1989" name="Proc. Natl. Acad. Sci. U.S.A.">
        <title>Dynamics of mitochondrial DNA evolution in animals: amplification and sequencing with conserved primers.</title>
        <authorList>
            <person name="Kocher T.D."/>
            <person name="Thomas W.K."/>
            <person name="Meyer A."/>
            <person name="Edwards S.V."/>
            <person name="Paeaebo S."/>
            <person name="Villablanca F.X."/>
            <person name="Wilson A.C."/>
        </authorList>
    </citation>
    <scope>NUCLEOTIDE SEQUENCE [GENOMIC DNA]</scope>
</reference>
<protein>
    <recommendedName>
        <fullName>Cytochrome b</fullName>
    </recommendedName>
    <alternativeName>
        <fullName>Complex III subunit 3</fullName>
    </alternativeName>
    <alternativeName>
        <fullName>Complex III subunit III</fullName>
    </alternativeName>
    <alternativeName>
        <fullName>Cytochrome b-c1 complex subunit 3</fullName>
    </alternativeName>
    <alternativeName>
        <fullName>Ubiquinol-cytochrome-c reductase complex cytochrome b subunit</fullName>
    </alternativeName>
</protein>
<comment type="function">
    <text evidence="2">Component of the ubiquinol-cytochrome c reductase complex (complex III or cytochrome b-c1 complex) that is part of the mitochondrial respiratory chain. The b-c1 complex mediates electron transfer from ubiquinol to cytochrome c. Contributes to the generation of a proton gradient across the mitochondrial membrane that is then used for ATP synthesis.</text>
</comment>
<comment type="cofactor">
    <cofactor evidence="2">
        <name>heme b</name>
        <dbReference type="ChEBI" id="CHEBI:60344"/>
    </cofactor>
    <text evidence="2">Binds 2 heme b groups non-covalently.</text>
</comment>
<comment type="subunit">
    <text evidence="2">The cytochrome bc1 complex contains 3 respiratory subunits (MT-CYB, CYC1 and UQCRFS1), 2 core proteins (UQCRC1 and UQCRC2) and probably 6 low-molecular weight proteins.</text>
</comment>
<comment type="subcellular location">
    <subcellularLocation>
        <location evidence="2">Mitochondrion inner membrane</location>
        <topology evidence="2">Multi-pass membrane protein</topology>
    </subcellularLocation>
</comment>
<comment type="miscellaneous">
    <text evidence="1">Heme 1 (or BL or b562) is low-potential and absorbs at about 562 nm, and heme 2 (or BH or b566) is high-potential and absorbs at about 566 nm.</text>
</comment>
<comment type="similarity">
    <text evidence="3">Belongs to the cytochrome b family.</text>
</comment>
<comment type="caution">
    <text evidence="2">The full-length protein contains only eight transmembrane helices, not nine as predicted by bioinformatics tools.</text>
</comment>
<dbReference type="EMBL" id="M25691">
    <property type="protein sequence ID" value="AAA31685.1"/>
    <property type="molecule type" value="Genomic_DNA"/>
</dbReference>
<dbReference type="PIR" id="B33286">
    <property type="entry name" value="B33286"/>
</dbReference>
<dbReference type="SMR" id="P69220"/>
<dbReference type="Proteomes" id="UP000261340">
    <property type="component" value="Whole Genome Shotgun Assembly"/>
</dbReference>
<dbReference type="GO" id="GO:0005743">
    <property type="term" value="C:mitochondrial inner membrane"/>
    <property type="evidence" value="ECO:0007669"/>
    <property type="project" value="UniProtKB-SubCell"/>
</dbReference>
<dbReference type="GO" id="GO:0046872">
    <property type="term" value="F:metal ion binding"/>
    <property type="evidence" value="ECO:0007669"/>
    <property type="project" value="UniProtKB-KW"/>
</dbReference>
<dbReference type="GO" id="GO:0008121">
    <property type="term" value="F:ubiquinol-cytochrome-c reductase activity"/>
    <property type="evidence" value="ECO:0007669"/>
    <property type="project" value="TreeGrafter"/>
</dbReference>
<dbReference type="GO" id="GO:0006122">
    <property type="term" value="P:mitochondrial electron transport, ubiquinol to cytochrome c"/>
    <property type="evidence" value="ECO:0007669"/>
    <property type="project" value="TreeGrafter"/>
</dbReference>
<dbReference type="Gene3D" id="1.20.810.10">
    <property type="entry name" value="Cytochrome Bc1 Complex, Chain C"/>
    <property type="match status" value="1"/>
</dbReference>
<dbReference type="InterPro" id="IPR005797">
    <property type="entry name" value="Cyt_b/b6_N"/>
</dbReference>
<dbReference type="InterPro" id="IPR027387">
    <property type="entry name" value="Cytb/b6-like_sf"/>
</dbReference>
<dbReference type="InterPro" id="IPR016174">
    <property type="entry name" value="Di-haem_cyt_TM"/>
</dbReference>
<dbReference type="PANTHER" id="PTHR19271">
    <property type="entry name" value="CYTOCHROME B"/>
    <property type="match status" value="1"/>
</dbReference>
<dbReference type="PANTHER" id="PTHR19271:SF16">
    <property type="entry name" value="CYTOCHROME B"/>
    <property type="match status" value="1"/>
</dbReference>
<dbReference type="Pfam" id="PF00033">
    <property type="entry name" value="Cytochrome_B"/>
    <property type="match status" value="1"/>
</dbReference>
<dbReference type="SUPFAM" id="SSF81342">
    <property type="entry name" value="Transmembrane di-heme cytochromes"/>
    <property type="match status" value="1"/>
</dbReference>
<dbReference type="PROSITE" id="PS51002">
    <property type="entry name" value="CYTB_NTER"/>
    <property type="match status" value="1"/>
</dbReference>
<organism>
    <name type="scientific">Amphilophus citrinellus</name>
    <name type="common">Midas cichlid</name>
    <name type="synonym">Cichlasoma citrinellum</name>
    <dbReference type="NCBI Taxonomy" id="61819"/>
    <lineage>
        <taxon>Eukaryota</taxon>
        <taxon>Metazoa</taxon>
        <taxon>Chordata</taxon>
        <taxon>Craniata</taxon>
        <taxon>Vertebrata</taxon>
        <taxon>Euteleostomi</taxon>
        <taxon>Actinopterygii</taxon>
        <taxon>Neopterygii</taxon>
        <taxon>Teleostei</taxon>
        <taxon>Neoteleostei</taxon>
        <taxon>Acanthomorphata</taxon>
        <taxon>Ovalentaria</taxon>
        <taxon>Cichlomorphae</taxon>
        <taxon>Cichliformes</taxon>
        <taxon>Cichlidae</taxon>
        <taxon>New World cichlids</taxon>
        <taxon>Cichlasomatinae</taxon>
        <taxon>Heroini</taxon>
        <taxon>Amphilophus</taxon>
    </lineage>
</organism>
<geneLocation type="mitochondrion"/>
<proteinExistence type="inferred from homology"/>